<proteinExistence type="inferred from homology"/>
<gene>
    <name type="primary">pdxA</name>
    <name type="ordered locus">CLB_2147</name>
</gene>
<evidence type="ECO:0000250" key="1">
    <source>
        <dbReference type="UniProtKB" id="P19624"/>
    </source>
</evidence>
<evidence type="ECO:0000250" key="2">
    <source>
        <dbReference type="UniProtKB" id="P58718"/>
    </source>
</evidence>
<evidence type="ECO:0000305" key="3"/>
<protein>
    <recommendedName>
        <fullName evidence="2">Putative D-threonate 4-phosphate dehydrogenase</fullName>
        <ecNumber evidence="2">1.1.1.408</ecNumber>
    </recommendedName>
</protein>
<name>PDXA2_CLOB1</name>
<keyword id="KW-0119">Carbohydrate metabolism</keyword>
<keyword id="KW-0479">Metal-binding</keyword>
<keyword id="KW-0520">NAD</keyword>
<keyword id="KW-0560">Oxidoreductase</keyword>
<accession>A7FVM3</accession>
<feature type="chain" id="PRO_1000051497" description="Putative D-threonate 4-phosphate dehydrogenase">
    <location>
        <begin position="1"/>
        <end position="334"/>
    </location>
</feature>
<feature type="binding site" evidence="1">
    <location>
        <position position="141"/>
    </location>
    <ligand>
        <name>substrate</name>
    </ligand>
</feature>
<feature type="binding site" evidence="1">
    <location>
        <position position="142"/>
    </location>
    <ligand>
        <name>substrate</name>
    </ligand>
</feature>
<feature type="binding site" evidence="1">
    <location>
        <position position="171"/>
    </location>
    <ligand>
        <name>a divalent metal cation</name>
        <dbReference type="ChEBI" id="CHEBI:60240"/>
        <note>ligand shared between dimeric partners</note>
    </ligand>
</feature>
<feature type="binding site" evidence="1">
    <location>
        <position position="215"/>
    </location>
    <ligand>
        <name>a divalent metal cation</name>
        <dbReference type="ChEBI" id="CHEBI:60240"/>
        <note>ligand shared between dimeric partners</note>
    </ligand>
</feature>
<feature type="binding site" evidence="1">
    <location>
        <position position="270"/>
    </location>
    <ligand>
        <name>a divalent metal cation</name>
        <dbReference type="ChEBI" id="CHEBI:60240"/>
        <note>ligand shared between dimeric partners</note>
    </ligand>
</feature>
<feature type="binding site" evidence="1">
    <location>
        <position position="278"/>
    </location>
    <ligand>
        <name>substrate</name>
    </ligand>
</feature>
<feature type="binding site" evidence="1">
    <location>
        <position position="296"/>
    </location>
    <ligand>
        <name>substrate</name>
    </ligand>
</feature>
<comment type="function">
    <text evidence="2">Catalyzes the NAD-dependent oxidation and subsequent decarboxylation of D-threonate 4-phosphate to produce dihydroxyacetone phosphate (DHAP).</text>
</comment>
<comment type="catalytic activity">
    <reaction evidence="2">
        <text>4-O-phospho-D-threonate + NAD(+) = dihydroxyacetone phosphate + CO2 + NADH</text>
        <dbReference type="Rhea" id="RHEA:52396"/>
        <dbReference type="ChEBI" id="CHEBI:16526"/>
        <dbReference type="ChEBI" id="CHEBI:57540"/>
        <dbReference type="ChEBI" id="CHEBI:57642"/>
        <dbReference type="ChEBI" id="CHEBI:57945"/>
        <dbReference type="ChEBI" id="CHEBI:136590"/>
        <dbReference type="EC" id="1.1.1.408"/>
    </reaction>
</comment>
<comment type="cofactor">
    <cofactor evidence="1">
        <name>a divalent metal cation</name>
        <dbReference type="ChEBI" id="CHEBI:60240"/>
    </cofactor>
    <text evidence="1">Binds 1 divalent metal cation per subunit.</text>
</comment>
<comment type="subunit">
    <text evidence="2">Homodimer.</text>
</comment>
<comment type="similarity">
    <text evidence="3">Belongs to the PdxA family. PdxA2 subfamily.</text>
</comment>
<reference key="1">
    <citation type="journal article" date="2007" name="PLoS ONE">
        <title>Analysis of the neurotoxin complex genes in Clostridium botulinum A1-A4 and B1 strains: BoNT/A3, /Ba4 and /B1 clusters are located within plasmids.</title>
        <authorList>
            <person name="Smith T.J."/>
            <person name="Hill K.K."/>
            <person name="Foley B.T."/>
            <person name="Detter J.C."/>
            <person name="Munk A.C."/>
            <person name="Bruce D.C."/>
            <person name="Doggett N.A."/>
            <person name="Smith L.A."/>
            <person name="Marks J.D."/>
            <person name="Xie G."/>
            <person name="Brettin T.S."/>
        </authorList>
    </citation>
    <scope>NUCLEOTIDE SEQUENCE [LARGE SCALE GENOMIC DNA]</scope>
    <source>
        <strain>ATCC 19397 / Type A</strain>
    </source>
</reference>
<dbReference type="EC" id="1.1.1.408" evidence="2"/>
<dbReference type="EMBL" id="CP000726">
    <property type="protein sequence ID" value="ABS35267.1"/>
    <property type="molecule type" value="Genomic_DNA"/>
</dbReference>
<dbReference type="RefSeq" id="WP_012047748.1">
    <property type="nucleotide sequence ID" value="NC_009697.1"/>
</dbReference>
<dbReference type="SMR" id="A7FVM3"/>
<dbReference type="GeneID" id="5186463"/>
<dbReference type="KEGG" id="cba:CLB_2147"/>
<dbReference type="HOGENOM" id="CLU_040168_0_1_9"/>
<dbReference type="GO" id="GO:0046872">
    <property type="term" value="F:metal ion binding"/>
    <property type="evidence" value="ECO:0007669"/>
    <property type="project" value="UniProtKB-KW"/>
</dbReference>
<dbReference type="GO" id="GO:0051287">
    <property type="term" value="F:NAD binding"/>
    <property type="evidence" value="ECO:0007669"/>
    <property type="project" value="InterPro"/>
</dbReference>
<dbReference type="GO" id="GO:0016491">
    <property type="term" value="F:oxidoreductase activity"/>
    <property type="evidence" value="ECO:0007669"/>
    <property type="project" value="UniProtKB-KW"/>
</dbReference>
<dbReference type="Gene3D" id="3.40.718.10">
    <property type="entry name" value="Isopropylmalate Dehydrogenase"/>
    <property type="match status" value="1"/>
</dbReference>
<dbReference type="InterPro" id="IPR005255">
    <property type="entry name" value="PdxA_fam"/>
</dbReference>
<dbReference type="NCBIfam" id="TIGR00557">
    <property type="entry name" value="pdxA"/>
    <property type="match status" value="1"/>
</dbReference>
<dbReference type="NCBIfam" id="NF002992">
    <property type="entry name" value="PRK03743.1"/>
    <property type="match status" value="1"/>
</dbReference>
<dbReference type="PANTHER" id="PTHR30004">
    <property type="entry name" value="4-HYDROXYTHREONINE-4-PHOSPHATE DEHYDROGENASE"/>
    <property type="match status" value="1"/>
</dbReference>
<dbReference type="PANTHER" id="PTHR30004:SF6">
    <property type="entry name" value="D-THREONATE 4-PHOSPHATE DEHYDROGENASE"/>
    <property type="match status" value="1"/>
</dbReference>
<dbReference type="Pfam" id="PF04166">
    <property type="entry name" value="PdxA"/>
    <property type="match status" value="1"/>
</dbReference>
<dbReference type="SUPFAM" id="SSF53659">
    <property type="entry name" value="Isocitrate/Isopropylmalate dehydrogenase-like"/>
    <property type="match status" value="1"/>
</dbReference>
<organism>
    <name type="scientific">Clostridium botulinum (strain ATCC 19397 / Type A)</name>
    <dbReference type="NCBI Taxonomy" id="441770"/>
    <lineage>
        <taxon>Bacteria</taxon>
        <taxon>Bacillati</taxon>
        <taxon>Bacillota</taxon>
        <taxon>Clostridia</taxon>
        <taxon>Eubacteriales</taxon>
        <taxon>Clostridiaceae</taxon>
        <taxon>Clostridium</taxon>
    </lineage>
</organism>
<sequence>MINNKPIIGIPIGDPAGVGPEIVVKSLTEAEVYEKCNPILIGDAKVIKQAMGFCNVNLNINSIKKADEGKFTLGTIDLIDLNNIDIDELKIGKVQGIAGKAAFEYIKKSVEMAKEGELDAIATTPINKESLREGNVNYIGHTEILADLTDTEDPLTMFEVRGMRVFFLTRHVSLRKACDLVTKERVLDYIIRCSEALEKLGVKDGKMAVAGLNPHSGEHGLFGDEEMKAVVPAIEEAQKMGYKVEGPIGADSVFHLALKGRYNSVLSLYHDQGHIATKTLDFERTIAVTNGMPILRTSVDHGTAFDIAGTGQASSVSMVEAIILAAKYSPKFKK</sequence>